<accession>A0JMV4</accession>
<dbReference type="EMBL" id="BC126019">
    <property type="protein sequence ID" value="AAI26020.1"/>
    <property type="molecule type" value="mRNA"/>
</dbReference>
<dbReference type="RefSeq" id="NP_001090434.1">
    <property type="nucleotide sequence ID" value="NM_001096965.1"/>
</dbReference>
<dbReference type="RefSeq" id="XP_018112478.1">
    <property type="nucleotide sequence ID" value="XM_018256989.1"/>
</dbReference>
<dbReference type="DNASU" id="779346"/>
<dbReference type="GeneID" id="779346"/>
<dbReference type="KEGG" id="xla:779346"/>
<dbReference type="AGR" id="Xenbase:XB-GENE-494991"/>
<dbReference type="CTD" id="779346"/>
<dbReference type="Xenbase" id="XB-GENE-494991">
    <property type="gene designation" value="rbm5.L"/>
</dbReference>
<dbReference type="OMA" id="MYDDRSP"/>
<dbReference type="OrthoDB" id="29221at2759"/>
<dbReference type="Proteomes" id="UP000186698">
    <property type="component" value="Chromosome 4L"/>
</dbReference>
<dbReference type="Bgee" id="779346">
    <property type="expression patterns" value="Expressed in brain and 19 other cell types or tissues"/>
</dbReference>
<dbReference type="GO" id="GO:0005634">
    <property type="term" value="C:nucleus"/>
    <property type="evidence" value="ECO:0000250"/>
    <property type="project" value="UniProtKB"/>
</dbReference>
<dbReference type="GO" id="GO:0005681">
    <property type="term" value="C:spliceosomal complex"/>
    <property type="evidence" value="ECO:0007669"/>
    <property type="project" value="UniProtKB-KW"/>
</dbReference>
<dbReference type="GO" id="GO:0003729">
    <property type="term" value="F:mRNA binding"/>
    <property type="evidence" value="ECO:0000250"/>
    <property type="project" value="UniProtKB"/>
</dbReference>
<dbReference type="GO" id="GO:0003723">
    <property type="term" value="F:RNA binding"/>
    <property type="evidence" value="ECO:0000318"/>
    <property type="project" value="GO_Central"/>
</dbReference>
<dbReference type="GO" id="GO:0008270">
    <property type="term" value="F:zinc ion binding"/>
    <property type="evidence" value="ECO:0007669"/>
    <property type="project" value="UniProtKB-KW"/>
</dbReference>
<dbReference type="GO" id="GO:0000398">
    <property type="term" value="P:mRNA splicing, via spliceosome"/>
    <property type="evidence" value="ECO:0000318"/>
    <property type="project" value="GO_Central"/>
</dbReference>
<dbReference type="GO" id="GO:0043065">
    <property type="term" value="P:positive regulation of apoptotic process"/>
    <property type="evidence" value="ECO:0000250"/>
    <property type="project" value="UniProtKB"/>
</dbReference>
<dbReference type="GO" id="GO:0000381">
    <property type="term" value="P:regulation of alternative mRNA splicing, via spliceosome"/>
    <property type="evidence" value="ECO:0000250"/>
    <property type="project" value="UniProtKB"/>
</dbReference>
<dbReference type="GO" id="GO:0000245">
    <property type="term" value="P:spliceosomal complex assembly"/>
    <property type="evidence" value="ECO:0000250"/>
    <property type="project" value="UniProtKB"/>
</dbReference>
<dbReference type="CDD" id="cd16168">
    <property type="entry name" value="OCRE_RBM5"/>
    <property type="match status" value="1"/>
</dbReference>
<dbReference type="CDD" id="cd12752">
    <property type="entry name" value="RRM1_RBM5"/>
    <property type="match status" value="1"/>
</dbReference>
<dbReference type="CDD" id="cd12755">
    <property type="entry name" value="RRM2_RBM5"/>
    <property type="match status" value="1"/>
</dbReference>
<dbReference type="FunFam" id="3.30.70.330:FF:000110">
    <property type="entry name" value="RNA-binding protein 10 isoform X1"/>
    <property type="match status" value="1"/>
</dbReference>
<dbReference type="FunFam" id="3.30.70.330:FF:000114">
    <property type="entry name" value="RNA-binding protein 10 isoform X1"/>
    <property type="match status" value="1"/>
</dbReference>
<dbReference type="FunFam" id="4.10.1060.10:FF:000005">
    <property type="entry name" value="RNA-binding protein 10 isoform X2"/>
    <property type="match status" value="1"/>
</dbReference>
<dbReference type="Gene3D" id="3.30.70.330">
    <property type="match status" value="2"/>
</dbReference>
<dbReference type="Gene3D" id="4.10.1060.10">
    <property type="entry name" value="Zinc finger, RanBP2-type"/>
    <property type="match status" value="1"/>
</dbReference>
<dbReference type="InterPro" id="IPR000467">
    <property type="entry name" value="G_patch_dom"/>
</dbReference>
<dbReference type="InterPro" id="IPR012677">
    <property type="entry name" value="Nucleotide-bd_a/b_plait_sf"/>
</dbReference>
<dbReference type="InterPro" id="IPR041591">
    <property type="entry name" value="OCRE"/>
</dbReference>
<dbReference type="InterPro" id="IPR035979">
    <property type="entry name" value="RBD_domain_sf"/>
</dbReference>
<dbReference type="InterPro" id="IPR034991">
    <property type="entry name" value="RBM5_RRM1"/>
</dbReference>
<dbReference type="InterPro" id="IPR034993">
    <property type="entry name" value="RBM5_RRM2"/>
</dbReference>
<dbReference type="InterPro" id="IPR000504">
    <property type="entry name" value="RRM_dom"/>
</dbReference>
<dbReference type="InterPro" id="IPR013087">
    <property type="entry name" value="Znf_C2H2_type"/>
</dbReference>
<dbReference type="InterPro" id="IPR001876">
    <property type="entry name" value="Znf_RanBP2"/>
</dbReference>
<dbReference type="InterPro" id="IPR036443">
    <property type="entry name" value="Znf_RanBP2_sf"/>
</dbReference>
<dbReference type="PANTHER" id="PTHR13948">
    <property type="entry name" value="RNA-BINDING PROTEIN"/>
    <property type="match status" value="1"/>
</dbReference>
<dbReference type="PANTHER" id="PTHR13948:SF21">
    <property type="entry name" value="RNA-BINDING PROTEIN 5"/>
    <property type="match status" value="1"/>
</dbReference>
<dbReference type="Pfam" id="PF01585">
    <property type="entry name" value="G-patch"/>
    <property type="match status" value="1"/>
</dbReference>
<dbReference type="Pfam" id="PF17780">
    <property type="entry name" value="OCRE"/>
    <property type="match status" value="1"/>
</dbReference>
<dbReference type="Pfam" id="PF00076">
    <property type="entry name" value="RRM_1"/>
    <property type="match status" value="1"/>
</dbReference>
<dbReference type="Pfam" id="PF00641">
    <property type="entry name" value="Zn_ribbon_RanBP"/>
    <property type="match status" value="1"/>
</dbReference>
<dbReference type="SMART" id="SM00443">
    <property type="entry name" value="G_patch"/>
    <property type="match status" value="1"/>
</dbReference>
<dbReference type="SMART" id="SM00360">
    <property type="entry name" value="RRM"/>
    <property type="match status" value="2"/>
</dbReference>
<dbReference type="SMART" id="SM00547">
    <property type="entry name" value="ZnF_RBZ"/>
    <property type="match status" value="1"/>
</dbReference>
<dbReference type="SUPFAM" id="SSF90209">
    <property type="entry name" value="Ran binding protein zinc finger-like"/>
    <property type="match status" value="1"/>
</dbReference>
<dbReference type="SUPFAM" id="SSF54928">
    <property type="entry name" value="RNA-binding domain, RBD"/>
    <property type="match status" value="2"/>
</dbReference>
<dbReference type="PROSITE" id="PS50174">
    <property type="entry name" value="G_PATCH"/>
    <property type="match status" value="1"/>
</dbReference>
<dbReference type="PROSITE" id="PS50102">
    <property type="entry name" value="RRM"/>
    <property type="match status" value="2"/>
</dbReference>
<dbReference type="PROSITE" id="PS01358">
    <property type="entry name" value="ZF_RANBP2_1"/>
    <property type="match status" value="1"/>
</dbReference>
<dbReference type="PROSITE" id="PS50199">
    <property type="entry name" value="ZF_RANBP2_2"/>
    <property type="match status" value="1"/>
</dbReference>
<dbReference type="PROSITE" id="PS50157">
    <property type="entry name" value="ZINC_FINGER_C2H2_2"/>
    <property type="match status" value="1"/>
</dbReference>
<organism>
    <name type="scientific">Xenopus laevis</name>
    <name type="common">African clawed frog</name>
    <dbReference type="NCBI Taxonomy" id="8355"/>
    <lineage>
        <taxon>Eukaryota</taxon>
        <taxon>Metazoa</taxon>
        <taxon>Chordata</taxon>
        <taxon>Craniata</taxon>
        <taxon>Vertebrata</taxon>
        <taxon>Euteleostomi</taxon>
        <taxon>Amphibia</taxon>
        <taxon>Batrachia</taxon>
        <taxon>Anura</taxon>
        <taxon>Pipoidea</taxon>
        <taxon>Pipidae</taxon>
        <taxon>Xenopodinae</taxon>
        <taxon>Xenopus</taxon>
        <taxon>Xenopus</taxon>
    </lineage>
</organism>
<sequence length="833" mass="93839">MGSDKRVSRSERSGRYGSGFDRDDRDDRDNRSRRRDSEYKRYRDERSDRYDDYRDYDSPERDRMRDRERRNSDRSEDGYHSDGDYMDHDYRQDYYMDEKESKTIMLRGLPININENDIRELVESFEGPQPADVRLMKRKTGLSRGFAFVEFYHLQDSTSWMEANQKKLVIQGKTIAMHYSNPRPKFEDWLCNKCGLYNFRRRLKCFRCGAAKAESDMEAPSGSSEAPQSADYYSDSGYVSSAIILRNIGPHTVVDSILSALAPYVSLVVSNIRLIKDKQTQQNRGFAFVQLPSALEASQLLQILQTLHPPLKIDGKTIGVDFAKSARKDLVLPDGHRVSAFSVASTAIAAAQWSSTQPAQQSGEGGDYAYLQPGQEGCSNYGQCSQDYQPFYQTQTGAAEQGTAPQAESSSPVPATTSAVVCQSPQMYQQPGSPTQSSTSTVAASATPASGTSAEEAAAPNAIVPGLKYSVPDTSTYQYDESSGYYYDPQTGLYYDPNSQYYYNSLTQQYLYWDGEKQTYLPAADGAGQSGTQPNGANPGTSKEGKEKKEKPKSKTAQQIAKDMERWAKSLNKQKENFKNSFQPLRDEERKESAAADAGFALFEKKQGSLLERQFLPDMMMMVNTEEEKPPNTALVAAYSGDSDNEEENERFIGAVDDEKLMDWKKLACLLCRRQFPNKDALTRHQQLSDLHKQNLEVYRRSKLSEQEYEAEQTERESKYRDRAAERRVKYGIPEPPEPKRKRFAPTVVNYEQPTKDGIDNSNIGNKMLQAMGWKEGSGLGRKSQGITAPIQAQVRMRGAGLGAKGSSYGVNTSDSYKDAVRKAMFARFSEME</sequence>
<comment type="function">
    <text evidence="1">Component of the spliceosome A complex. Regulates alternative splicing of a number of mRNAs. May modulate splice site pairing after recruitment of the U1 and U2 snRNPs to the 5' and 3' splice sites of the intron (By similarity).</text>
</comment>
<comment type="subunit">
    <text evidence="1">Component of the spliceosome A complex (also known as the prespliceosome). Appears to dissociate from the spliceosome upon formation of the spliceosome B complex (also known as the precatalytic spliceosome), in which the heterotrimeric U4/U6.U5 snRNPs are bound (By similarity).</text>
</comment>
<comment type="subcellular location">
    <subcellularLocation>
        <location evidence="1">Nucleus</location>
    </subcellularLocation>
</comment>
<comment type="similarity">
    <text evidence="7">Belongs to the RBM5/RBM10 family.</text>
</comment>
<gene>
    <name type="primary">rbm5-a</name>
    <name type="synonym">rbm5</name>
</gene>
<reference key="1">
    <citation type="submission" date="2006-10" db="EMBL/GenBank/DDBJ databases">
        <authorList>
            <consortium name="NIH - Xenopus Gene Collection (XGC) project"/>
        </authorList>
    </citation>
    <scope>NUCLEOTIDE SEQUENCE [LARGE SCALE MRNA]</scope>
    <source>
        <tissue>Ovary</tissue>
    </source>
</reference>
<protein>
    <recommendedName>
        <fullName>RNA-binding protein 5-A</fullName>
    </recommendedName>
    <alternativeName>
        <fullName>RNA-binding motif protein 5-A</fullName>
    </alternativeName>
</protein>
<name>RBM5A_XENLA</name>
<evidence type="ECO:0000250" key="1"/>
<evidence type="ECO:0000255" key="2">
    <source>
        <dbReference type="PROSITE-ProRule" id="PRU00042"/>
    </source>
</evidence>
<evidence type="ECO:0000255" key="3">
    <source>
        <dbReference type="PROSITE-ProRule" id="PRU00092"/>
    </source>
</evidence>
<evidence type="ECO:0000255" key="4">
    <source>
        <dbReference type="PROSITE-ProRule" id="PRU00176"/>
    </source>
</evidence>
<evidence type="ECO:0000255" key="5">
    <source>
        <dbReference type="PROSITE-ProRule" id="PRU00322"/>
    </source>
</evidence>
<evidence type="ECO:0000256" key="6">
    <source>
        <dbReference type="SAM" id="MobiDB-lite"/>
    </source>
</evidence>
<evidence type="ECO:0000305" key="7"/>
<proteinExistence type="evidence at transcript level"/>
<feature type="chain" id="PRO_0000376806" description="RNA-binding protein 5-A">
    <location>
        <begin position="1"/>
        <end position="833"/>
    </location>
</feature>
<feature type="domain" description="RRM 1" evidence="4">
    <location>
        <begin position="102"/>
        <end position="182"/>
    </location>
</feature>
<feature type="domain" description="RRM 2" evidence="4">
    <location>
        <begin position="241"/>
        <end position="325"/>
    </location>
</feature>
<feature type="domain" description="G-patch" evidence="3">
    <location>
        <begin position="761"/>
        <end position="807"/>
    </location>
</feature>
<feature type="zinc finger region" description="RanBP2-type" evidence="5">
    <location>
        <begin position="185"/>
        <end position="214"/>
    </location>
</feature>
<feature type="zinc finger region" description="C2H2-type" evidence="2">
    <location>
        <begin position="667"/>
        <end position="692"/>
    </location>
</feature>
<feature type="region of interest" description="Disordered" evidence="6">
    <location>
        <begin position="1"/>
        <end position="87"/>
    </location>
</feature>
<feature type="region of interest" description="Disordered" evidence="6">
    <location>
        <begin position="396"/>
        <end position="458"/>
    </location>
</feature>
<feature type="region of interest" description="Disordered" evidence="6">
    <location>
        <begin position="523"/>
        <end position="559"/>
    </location>
</feature>
<feature type="compositionally biased region" description="Polar residues" evidence="6">
    <location>
        <begin position="396"/>
        <end position="428"/>
    </location>
</feature>
<feature type="compositionally biased region" description="Low complexity" evidence="6">
    <location>
        <begin position="429"/>
        <end position="458"/>
    </location>
</feature>
<keyword id="KW-0479">Metal-binding</keyword>
<keyword id="KW-0507">mRNA processing</keyword>
<keyword id="KW-0508">mRNA splicing</keyword>
<keyword id="KW-0539">Nucleus</keyword>
<keyword id="KW-1185">Reference proteome</keyword>
<keyword id="KW-0677">Repeat</keyword>
<keyword id="KW-0694">RNA-binding</keyword>
<keyword id="KW-0747">Spliceosome</keyword>
<keyword id="KW-0862">Zinc</keyword>
<keyword id="KW-0863">Zinc-finger</keyword>